<organism>
    <name type="scientific">Mus musculus</name>
    <name type="common">Mouse</name>
    <dbReference type="NCBI Taxonomy" id="10090"/>
    <lineage>
        <taxon>Eukaryota</taxon>
        <taxon>Metazoa</taxon>
        <taxon>Chordata</taxon>
        <taxon>Craniata</taxon>
        <taxon>Vertebrata</taxon>
        <taxon>Euteleostomi</taxon>
        <taxon>Mammalia</taxon>
        <taxon>Eutheria</taxon>
        <taxon>Euarchontoglires</taxon>
        <taxon>Glires</taxon>
        <taxon>Rodentia</taxon>
        <taxon>Myomorpha</taxon>
        <taxon>Muroidea</taxon>
        <taxon>Muridae</taxon>
        <taxon>Murinae</taxon>
        <taxon>Mus</taxon>
        <taxon>Mus</taxon>
    </lineage>
</organism>
<accession>Q3UEI1</accession>
<accession>Q8K0P4</accession>
<keyword id="KW-0025">Alternative splicing</keyword>
<keyword id="KW-0114">cAMP</keyword>
<keyword id="KW-0966">Cell projection</keyword>
<keyword id="KW-0969">Cilium</keyword>
<keyword id="KW-0378">Hydrolase</keyword>
<keyword id="KW-0460">Magnesium</keyword>
<keyword id="KW-0464">Manganese</keyword>
<keyword id="KW-0479">Metal-binding</keyword>
<keyword id="KW-0597">Phosphoprotein</keyword>
<keyword id="KW-1185">Reference proteome</keyword>
<keyword id="KW-0862">Zinc</keyword>
<sequence length="686" mass="76090">MRRSGTALSFLWTERVREPVDSGVAPVSPLGGGVILRRFSGTLLLPPLSSRLGSSGEAESAAHVVFTIGTQGTQRNLGSAQSSFDLENGLPGGKGLLDAQSGPSLGRALQPPVHHVQRRESFLYRSDSDHEPSPKAVSRTSSAASDLHGEDMIVTPFAQVLASLRTVRNNVAALAHGPGSATRQVLLGTPPHSSQQAAPTEDSGLQLVQETLEELDWCLEQLETLQTRRSVGEMASNKFKRMLNRELSYLSETSRSGNQVSEYISQTFLDQQAEVELPQPPTEDDPWPMAQITELRRSSHTSLPTAAIPRFGVQTDQEEQLAKELEDTNKWGLDVFKVAELSGNRPLTAVIFSVFQERDLLKTFQIPADTLLAYLLTLEGHYHSDVAYHNSMHAADVVQSAHVLLGTPALEAVFTDLEVLAAIFACAIHDVDHPGVSNQFLINTNSELALMYNDSSVLENHHLAVGFKLLQGENCDIFRNLSTKQRLSLRRMVIDMVLATDMSKHMSLLADLKTMVETKKVTSLGVLLLDNYSDRIQVLQSLVHCADLSNPAKPLPLYRQWTERIMAEFFQQGDRERESGLDISPMCDKHTASMEKSQVGFIDYIAQPLWETWADLVHPDAQELLDTLEDNREWYQSRIPCSPPHTMGSDRFKFELTLEEAEEEEEEEDEGQCTALNRESSELPST</sequence>
<proteinExistence type="evidence at protein level"/>
<reference key="1">
    <citation type="journal article" date="2005" name="Science">
        <title>The transcriptional landscape of the mammalian genome.</title>
        <authorList>
            <person name="Carninci P."/>
            <person name="Kasukawa T."/>
            <person name="Katayama S."/>
            <person name="Gough J."/>
            <person name="Frith M.C."/>
            <person name="Maeda N."/>
            <person name="Oyama R."/>
            <person name="Ravasi T."/>
            <person name="Lenhard B."/>
            <person name="Wells C."/>
            <person name="Kodzius R."/>
            <person name="Shimokawa K."/>
            <person name="Bajic V.B."/>
            <person name="Brenner S.E."/>
            <person name="Batalov S."/>
            <person name="Forrest A.R."/>
            <person name="Zavolan M."/>
            <person name="Davis M.J."/>
            <person name="Wilming L.G."/>
            <person name="Aidinis V."/>
            <person name="Allen J.E."/>
            <person name="Ambesi-Impiombato A."/>
            <person name="Apweiler R."/>
            <person name="Aturaliya R.N."/>
            <person name="Bailey T.L."/>
            <person name="Bansal M."/>
            <person name="Baxter L."/>
            <person name="Beisel K.W."/>
            <person name="Bersano T."/>
            <person name="Bono H."/>
            <person name="Chalk A.M."/>
            <person name="Chiu K.P."/>
            <person name="Choudhary V."/>
            <person name="Christoffels A."/>
            <person name="Clutterbuck D.R."/>
            <person name="Crowe M.L."/>
            <person name="Dalla E."/>
            <person name="Dalrymple B.P."/>
            <person name="de Bono B."/>
            <person name="Della Gatta G."/>
            <person name="di Bernardo D."/>
            <person name="Down T."/>
            <person name="Engstrom P."/>
            <person name="Fagiolini M."/>
            <person name="Faulkner G."/>
            <person name="Fletcher C.F."/>
            <person name="Fukushima T."/>
            <person name="Furuno M."/>
            <person name="Futaki S."/>
            <person name="Gariboldi M."/>
            <person name="Georgii-Hemming P."/>
            <person name="Gingeras T.R."/>
            <person name="Gojobori T."/>
            <person name="Green R.E."/>
            <person name="Gustincich S."/>
            <person name="Harbers M."/>
            <person name="Hayashi Y."/>
            <person name="Hensch T.K."/>
            <person name="Hirokawa N."/>
            <person name="Hill D."/>
            <person name="Huminiecki L."/>
            <person name="Iacono M."/>
            <person name="Ikeo K."/>
            <person name="Iwama A."/>
            <person name="Ishikawa T."/>
            <person name="Jakt M."/>
            <person name="Kanapin A."/>
            <person name="Katoh M."/>
            <person name="Kawasawa Y."/>
            <person name="Kelso J."/>
            <person name="Kitamura H."/>
            <person name="Kitano H."/>
            <person name="Kollias G."/>
            <person name="Krishnan S.P."/>
            <person name="Kruger A."/>
            <person name="Kummerfeld S.K."/>
            <person name="Kurochkin I.V."/>
            <person name="Lareau L.F."/>
            <person name="Lazarevic D."/>
            <person name="Lipovich L."/>
            <person name="Liu J."/>
            <person name="Liuni S."/>
            <person name="McWilliam S."/>
            <person name="Madan Babu M."/>
            <person name="Madera M."/>
            <person name="Marchionni L."/>
            <person name="Matsuda H."/>
            <person name="Matsuzawa S."/>
            <person name="Miki H."/>
            <person name="Mignone F."/>
            <person name="Miyake S."/>
            <person name="Morris K."/>
            <person name="Mottagui-Tabar S."/>
            <person name="Mulder N."/>
            <person name="Nakano N."/>
            <person name="Nakauchi H."/>
            <person name="Ng P."/>
            <person name="Nilsson R."/>
            <person name="Nishiguchi S."/>
            <person name="Nishikawa S."/>
            <person name="Nori F."/>
            <person name="Ohara O."/>
            <person name="Okazaki Y."/>
            <person name="Orlando V."/>
            <person name="Pang K.C."/>
            <person name="Pavan W.J."/>
            <person name="Pavesi G."/>
            <person name="Pesole G."/>
            <person name="Petrovsky N."/>
            <person name="Piazza S."/>
            <person name="Reed J."/>
            <person name="Reid J.F."/>
            <person name="Ring B.Z."/>
            <person name="Ringwald M."/>
            <person name="Rost B."/>
            <person name="Ruan Y."/>
            <person name="Salzberg S.L."/>
            <person name="Sandelin A."/>
            <person name="Schneider C."/>
            <person name="Schoenbach C."/>
            <person name="Sekiguchi K."/>
            <person name="Semple C.A."/>
            <person name="Seno S."/>
            <person name="Sessa L."/>
            <person name="Sheng Y."/>
            <person name="Shibata Y."/>
            <person name="Shimada H."/>
            <person name="Shimada K."/>
            <person name="Silva D."/>
            <person name="Sinclair B."/>
            <person name="Sperling S."/>
            <person name="Stupka E."/>
            <person name="Sugiura K."/>
            <person name="Sultana R."/>
            <person name="Takenaka Y."/>
            <person name="Taki K."/>
            <person name="Tammoja K."/>
            <person name="Tan S.L."/>
            <person name="Tang S."/>
            <person name="Taylor M.S."/>
            <person name="Tegner J."/>
            <person name="Teichmann S.A."/>
            <person name="Ueda H.R."/>
            <person name="van Nimwegen E."/>
            <person name="Verardo R."/>
            <person name="Wei C.L."/>
            <person name="Yagi K."/>
            <person name="Yamanishi H."/>
            <person name="Zabarovsky E."/>
            <person name="Zhu S."/>
            <person name="Zimmer A."/>
            <person name="Hide W."/>
            <person name="Bult C."/>
            <person name="Grimmond S.M."/>
            <person name="Teasdale R.D."/>
            <person name="Liu E.T."/>
            <person name="Brusic V."/>
            <person name="Quackenbush J."/>
            <person name="Wahlestedt C."/>
            <person name="Mattick J.S."/>
            <person name="Hume D.A."/>
            <person name="Kai C."/>
            <person name="Sasaki D."/>
            <person name="Tomaru Y."/>
            <person name="Fukuda S."/>
            <person name="Kanamori-Katayama M."/>
            <person name="Suzuki M."/>
            <person name="Aoki J."/>
            <person name="Arakawa T."/>
            <person name="Iida J."/>
            <person name="Imamura K."/>
            <person name="Itoh M."/>
            <person name="Kato T."/>
            <person name="Kawaji H."/>
            <person name="Kawagashira N."/>
            <person name="Kawashima T."/>
            <person name="Kojima M."/>
            <person name="Kondo S."/>
            <person name="Konno H."/>
            <person name="Nakano K."/>
            <person name="Ninomiya N."/>
            <person name="Nishio T."/>
            <person name="Okada M."/>
            <person name="Plessy C."/>
            <person name="Shibata K."/>
            <person name="Shiraki T."/>
            <person name="Suzuki S."/>
            <person name="Tagami M."/>
            <person name="Waki K."/>
            <person name="Watahiki A."/>
            <person name="Okamura-Oho Y."/>
            <person name="Suzuki H."/>
            <person name="Kawai J."/>
            <person name="Hayashizaki Y."/>
        </authorList>
    </citation>
    <scope>NUCLEOTIDE SEQUENCE [LARGE SCALE MRNA] (ISOFORM 1)</scope>
    <source>
        <strain>C57BL/6J</strain>
        <tissue>Liver</tissue>
    </source>
</reference>
<reference key="2">
    <citation type="journal article" date="2004" name="Genome Res.">
        <title>The status, quality, and expansion of the NIH full-length cDNA project: the Mammalian Gene Collection (MGC).</title>
        <authorList>
            <consortium name="The MGC Project Team"/>
        </authorList>
    </citation>
    <scope>NUCLEOTIDE SEQUENCE [LARGE SCALE MRNA] (ISOFORM 2)</scope>
    <source>
        <strain>FVB/N</strain>
        <tissue>Kidney</tissue>
    </source>
</reference>
<reference key="3">
    <citation type="journal article" date="2010" name="Cell">
        <title>A tissue-specific atlas of mouse protein phosphorylation and expression.</title>
        <authorList>
            <person name="Huttlin E.L."/>
            <person name="Jedrychowski M.P."/>
            <person name="Elias J.E."/>
            <person name="Goswami T."/>
            <person name="Rad R."/>
            <person name="Beausoleil S.A."/>
            <person name="Villen J."/>
            <person name="Haas W."/>
            <person name="Sowa M.E."/>
            <person name="Gygi S.P."/>
        </authorList>
    </citation>
    <scope>PHOSPHORYLATION [LARGE SCALE ANALYSIS] AT SER-9; SER-28; SER-40; SER-83 AND SER-642</scope>
    <scope>IDENTIFICATION BY MASS SPECTROMETRY [LARGE SCALE ANALYSIS]</scope>
    <source>
        <tissue>Kidney</tissue>
    </source>
</reference>
<reference key="4">
    <citation type="journal article" date="2011" name="Proc. Natl. Acad. Sci. U.S.A.">
        <title>Polycystin-2 and phosphodiesterase 4C are components of a ciliary A-kinase anchoring protein complex that is disrupted in cystic kidney diseases.</title>
        <authorList>
            <person name="Choi Y.H."/>
            <person name="Suzuki A."/>
            <person name="Hajarnis S."/>
            <person name="Ma Z."/>
            <person name="Chapin H.C."/>
            <person name="Caplan M.J."/>
            <person name="Pontoglio M."/>
            <person name="Somlo S."/>
            <person name="Igarashi P."/>
        </authorList>
    </citation>
    <scope>SUBCELLULAR LOCATION</scope>
    <scope>INTERACTION WITH AKAP5; ADCY5; ADCY6 AND PKD2</scope>
</reference>
<feature type="chain" id="PRO_0000198812" description="3',5'-cyclic-AMP phosphodiesterase 4C">
    <location>
        <begin position="1"/>
        <end position="686"/>
    </location>
</feature>
<feature type="domain" description="PDEase" evidence="4">
    <location>
        <begin position="313"/>
        <end position="642"/>
    </location>
</feature>
<feature type="region of interest" description="Disordered" evidence="5">
    <location>
        <begin position="88"/>
        <end position="116"/>
    </location>
</feature>
<feature type="region of interest" description="Disordered" evidence="5">
    <location>
        <begin position="124"/>
        <end position="143"/>
    </location>
</feature>
<feature type="region of interest" description="Disordered" evidence="5">
    <location>
        <begin position="660"/>
        <end position="686"/>
    </location>
</feature>
<feature type="compositionally biased region" description="Basic and acidic residues" evidence="5">
    <location>
        <begin position="124"/>
        <end position="133"/>
    </location>
</feature>
<feature type="compositionally biased region" description="Acidic residues" evidence="5">
    <location>
        <begin position="660"/>
        <end position="671"/>
    </location>
</feature>
<feature type="compositionally biased region" description="Polar residues" evidence="5">
    <location>
        <begin position="674"/>
        <end position="686"/>
    </location>
</feature>
<feature type="active site" description="Proton donor" evidence="1">
    <location>
        <position position="389"/>
    </location>
</feature>
<feature type="binding site" evidence="3">
    <location>
        <position position="389"/>
    </location>
    <ligand>
        <name>3',5'-cyclic AMP</name>
        <dbReference type="ChEBI" id="CHEBI:58165"/>
    </ligand>
</feature>
<feature type="binding site" evidence="1">
    <location>
        <position position="389"/>
    </location>
    <ligand>
        <name>AMP</name>
        <dbReference type="ChEBI" id="CHEBI:456215"/>
    </ligand>
</feature>
<feature type="binding site" evidence="1">
    <location>
        <position position="393"/>
    </location>
    <ligand>
        <name>AMP</name>
        <dbReference type="ChEBI" id="CHEBI:456215"/>
    </ligand>
</feature>
<feature type="binding site" evidence="2">
    <location>
        <position position="393"/>
    </location>
    <ligand>
        <name>Zn(2+)</name>
        <dbReference type="ChEBI" id="CHEBI:29105"/>
        <label>1</label>
    </ligand>
</feature>
<feature type="binding site" evidence="2">
    <location>
        <position position="429"/>
    </location>
    <ligand>
        <name>Zn(2+)</name>
        <dbReference type="ChEBI" id="CHEBI:29105"/>
        <label>1</label>
    </ligand>
</feature>
<feature type="binding site" evidence="1">
    <location>
        <position position="430"/>
    </location>
    <ligand>
        <name>AMP</name>
        <dbReference type="ChEBI" id="CHEBI:456215"/>
    </ligand>
</feature>
<feature type="binding site" evidence="2">
    <location>
        <position position="430"/>
    </location>
    <ligand>
        <name>Mg(2+)</name>
        <dbReference type="ChEBI" id="CHEBI:18420"/>
    </ligand>
</feature>
<feature type="binding site" evidence="1">
    <location>
        <position position="430"/>
    </location>
    <ligand>
        <name>Mn(2+)</name>
        <dbReference type="ChEBI" id="CHEBI:29035"/>
    </ligand>
</feature>
<feature type="binding site" evidence="2">
    <location>
        <position position="430"/>
    </location>
    <ligand>
        <name>Zn(2+)</name>
        <dbReference type="ChEBI" id="CHEBI:29105"/>
        <label>1</label>
    </ligand>
</feature>
<feature type="binding site" evidence="1">
    <location>
        <position position="430"/>
    </location>
    <ligand>
        <name>Zn(2+)</name>
        <dbReference type="ChEBI" id="CHEBI:29105"/>
        <label>2</label>
    </ligand>
</feature>
<feature type="binding site" evidence="1">
    <location>
        <position position="547"/>
    </location>
    <ligand>
        <name>AMP</name>
        <dbReference type="ChEBI" id="CHEBI:456215"/>
    </ligand>
</feature>
<feature type="binding site" evidence="2">
    <location>
        <position position="547"/>
    </location>
    <ligand>
        <name>Zn(2+)</name>
        <dbReference type="ChEBI" id="CHEBI:29105"/>
        <label>1</label>
    </ligand>
</feature>
<feature type="binding site" evidence="3">
    <location>
        <position position="598"/>
    </location>
    <ligand>
        <name>3',5'-cyclic AMP</name>
        <dbReference type="ChEBI" id="CHEBI:58165"/>
    </ligand>
</feature>
<feature type="binding site" evidence="1">
    <location>
        <position position="598"/>
    </location>
    <ligand>
        <name>AMP</name>
        <dbReference type="ChEBI" id="CHEBI:456215"/>
    </ligand>
</feature>
<feature type="binding site" evidence="3">
    <location>
        <position position="601"/>
    </location>
    <ligand>
        <name>3',5'-cyclic AMP</name>
        <dbReference type="ChEBI" id="CHEBI:58165"/>
    </ligand>
</feature>
<feature type="binding site" evidence="1">
    <location>
        <position position="601"/>
    </location>
    <ligand>
        <name>AMP</name>
        <dbReference type="ChEBI" id="CHEBI:456215"/>
    </ligand>
</feature>
<feature type="modified residue" description="Phosphoserine" evidence="10">
    <location>
        <position position="9"/>
    </location>
</feature>
<feature type="modified residue" description="Phosphoserine" evidence="10">
    <location>
        <position position="28"/>
    </location>
</feature>
<feature type="modified residue" description="Phosphoserine" evidence="10">
    <location>
        <position position="40"/>
    </location>
</feature>
<feature type="modified residue" description="Phosphoserine" evidence="10">
    <location>
        <position position="83"/>
    </location>
</feature>
<feature type="modified residue" description="Phosphoserine" evidence="10">
    <location>
        <position position="642"/>
    </location>
</feature>
<feature type="splice variant" id="VSP_016663" description="In isoform 2." evidence="7">
    <location>
        <begin position="537"/>
        <end position="570"/>
    </location>
</feature>
<comment type="function">
    <text evidence="2">Hydrolyzes the second messenger cAMP, which is a key regulator of many important physiological processes.</text>
</comment>
<comment type="catalytic activity">
    <reaction evidence="2">
        <text>3',5'-cyclic AMP + H2O = AMP + H(+)</text>
        <dbReference type="Rhea" id="RHEA:25277"/>
        <dbReference type="ChEBI" id="CHEBI:15377"/>
        <dbReference type="ChEBI" id="CHEBI:15378"/>
        <dbReference type="ChEBI" id="CHEBI:58165"/>
        <dbReference type="ChEBI" id="CHEBI:456215"/>
        <dbReference type="EC" id="3.1.4.53"/>
    </reaction>
    <physiologicalReaction direction="left-to-right" evidence="2">
        <dbReference type="Rhea" id="RHEA:25278"/>
    </physiologicalReaction>
</comment>
<comment type="cofactor">
    <cofactor evidence="2">
        <name>Zn(2+)</name>
        <dbReference type="ChEBI" id="CHEBI:29105"/>
    </cofactor>
    <text evidence="2">Binds 2 divalent metal cations per subunit. Site 1 may preferentially bind zinc ions.</text>
</comment>
<comment type="cofactor">
    <cofactor evidence="2">
        <name>Mg(2+)</name>
        <dbReference type="ChEBI" id="CHEBI:18420"/>
    </cofactor>
    <cofactor evidence="1">
        <name>Mn(2+)</name>
        <dbReference type="ChEBI" id="CHEBI:29035"/>
    </cofactor>
    <text evidence="1 2">Binds 2 divalent metal cations per subunit (By similarity). Site 2 has a preference for magnesium and/or manganese ions (By similarity).</text>
</comment>
<comment type="pathway">
    <text evidence="2">Purine metabolism; 3',5'-cyclic AMP degradation; AMP from 3',5'-cyclic AMP: step 1/1.</text>
</comment>
<comment type="subunit">
    <text evidence="6">Part of a complex containing AKAP5, ADCY5, ADCY6 and PKD2.</text>
</comment>
<comment type="subcellular location">
    <subcellularLocation>
        <location evidence="6">Cell projection</location>
        <location evidence="6">Cilium</location>
    </subcellularLocation>
</comment>
<comment type="alternative products">
    <event type="alternative splicing"/>
    <isoform>
        <id>Q3UEI1-1</id>
        <name>1</name>
        <sequence type="displayed"/>
    </isoform>
    <isoform>
        <id>Q3UEI1-2</id>
        <name>2</name>
        <sequence type="described" ref="VSP_016663"/>
    </isoform>
</comment>
<comment type="similarity">
    <text evidence="8">Belongs to the cyclic nucleotide phosphodiesterase family. PDE4 subfamily.</text>
</comment>
<protein>
    <recommendedName>
        <fullName evidence="8">3',5'-cyclic-AMP phosphodiesterase 4C</fullName>
        <ecNumber evidence="2">3.1.4.53</ecNumber>
    </recommendedName>
    <alternativeName>
        <fullName evidence="8">cAMP-specific phosphodiesterase 4C</fullName>
    </alternativeName>
</protein>
<evidence type="ECO:0000250" key="1">
    <source>
        <dbReference type="UniProtKB" id="Q07343"/>
    </source>
</evidence>
<evidence type="ECO:0000250" key="2">
    <source>
        <dbReference type="UniProtKB" id="Q08493"/>
    </source>
</evidence>
<evidence type="ECO:0000250" key="3">
    <source>
        <dbReference type="UniProtKB" id="Q08499"/>
    </source>
</evidence>
<evidence type="ECO:0000255" key="4">
    <source>
        <dbReference type="PROSITE-ProRule" id="PRU01192"/>
    </source>
</evidence>
<evidence type="ECO:0000256" key="5">
    <source>
        <dbReference type="SAM" id="MobiDB-lite"/>
    </source>
</evidence>
<evidence type="ECO:0000269" key="6">
    <source>
    </source>
</evidence>
<evidence type="ECO:0000303" key="7">
    <source>
    </source>
</evidence>
<evidence type="ECO:0000305" key="8"/>
<evidence type="ECO:0000312" key="9">
    <source>
        <dbReference type="MGI" id="MGI:99556"/>
    </source>
</evidence>
<evidence type="ECO:0007744" key="10">
    <source>
    </source>
</evidence>
<dbReference type="EC" id="3.1.4.53" evidence="2"/>
<dbReference type="EMBL" id="AK149514">
    <property type="protein sequence ID" value="BAE28930.1"/>
    <property type="molecule type" value="mRNA"/>
</dbReference>
<dbReference type="EMBL" id="BC030873">
    <property type="protein sequence ID" value="AAH30873.1"/>
    <property type="molecule type" value="mRNA"/>
</dbReference>
<dbReference type="CCDS" id="CCDS22378.1">
    <molecule id="Q3UEI1-2"/>
</dbReference>
<dbReference type="CCDS" id="CCDS80891.1">
    <molecule id="Q3UEI1-1"/>
</dbReference>
<dbReference type="RefSeq" id="NP_001297394.1">
    <molecule id="Q3UEI1-1"/>
    <property type="nucleotide sequence ID" value="NM_001310465.1"/>
</dbReference>
<dbReference type="RefSeq" id="NP_963901.1">
    <molecule id="Q3UEI1-2"/>
    <property type="nucleotide sequence ID" value="NM_201607.2"/>
</dbReference>
<dbReference type="SMR" id="Q3UEI1"/>
<dbReference type="CORUM" id="Q3UEI1"/>
<dbReference type="FunCoup" id="Q3UEI1">
    <property type="interactions" value="554"/>
</dbReference>
<dbReference type="IntAct" id="Q3UEI1">
    <property type="interactions" value="1"/>
</dbReference>
<dbReference type="STRING" id="10090.ENSMUSP00000105722"/>
<dbReference type="BindingDB" id="Q3UEI1"/>
<dbReference type="ChEMBL" id="CHEMBL2111373"/>
<dbReference type="iPTMnet" id="Q3UEI1"/>
<dbReference type="PhosphoSitePlus" id="Q3UEI1"/>
<dbReference type="PaxDb" id="10090-ENSMUSP00000105722"/>
<dbReference type="ProteomicsDB" id="287809">
    <molecule id="Q3UEI1-1"/>
</dbReference>
<dbReference type="ProteomicsDB" id="287810">
    <molecule id="Q3UEI1-2"/>
</dbReference>
<dbReference type="DNASU" id="110385"/>
<dbReference type="Ensembl" id="ENSMUST00000034307.14">
    <molecule id="Q3UEI1-2"/>
    <property type="protein sequence ID" value="ENSMUSP00000034307.8"/>
    <property type="gene ID" value="ENSMUSG00000031842.16"/>
</dbReference>
<dbReference type="Ensembl" id="ENSMUST00000110095.3">
    <molecule id="Q3UEI1-1"/>
    <property type="protein sequence ID" value="ENSMUSP00000105722.3"/>
    <property type="gene ID" value="ENSMUSG00000031842.16"/>
</dbReference>
<dbReference type="Ensembl" id="ENSMUST00000239487.2">
    <molecule id="Q3UEI1-2"/>
    <property type="protein sequence ID" value="ENSMUSP00000159330.2"/>
    <property type="gene ID" value="ENSMUSG00000031842.16"/>
</dbReference>
<dbReference type="GeneID" id="110385"/>
<dbReference type="KEGG" id="mmu:110385"/>
<dbReference type="UCSC" id="uc009mbg.1">
    <molecule id="Q3UEI1-2"/>
    <property type="organism name" value="mouse"/>
</dbReference>
<dbReference type="UCSC" id="uc009mbh.1">
    <molecule id="Q3UEI1-1"/>
    <property type="organism name" value="mouse"/>
</dbReference>
<dbReference type="AGR" id="MGI:99556"/>
<dbReference type="CTD" id="5143"/>
<dbReference type="MGI" id="MGI:99556">
    <property type="gene designation" value="Pde4c"/>
</dbReference>
<dbReference type="VEuPathDB" id="HostDB:ENSMUSG00000031842"/>
<dbReference type="eggNOG" id="KOG3689">
    <property type="taxonomic scope" value="Eukaryota"/>
</dbReference>
<dbReference type="GeneTree" id="ENSGT00940000162285"/>
<dbReference type="HOGENOM" id="CLU_005940_5_3_1"/>
<dbReference type="InParanoid" id="Q3UEI1"/>
<dbReference type="OMA" id="DAVQTHR"/>
<dbReference type="OrthoDB" id="189220at2759"/>
<dbReference type="PhylomeDB" id="Q3UEI1"/>
<dbReference type="TreeFam" id="TF314638"/>
<dbReference type="Reactome" id="R-MMU-180024">
    <property type="pathway name" value="DARPP-32 events"/>
</dbReference>
<dbReference type="Reactome" id="R-MMU-418555">
    <property type="pathway name" value="G alpha (s) signalling events"/>
</dbReference>
<dbReference type="UniPathway" id="UPA00762">
    <property type="reaction ID" value="UER00747"/>
</dbReference>
<dbReference type="BioGRID-ORCS" id="110385">
    <property type="hits" value="1 hit in 64 CRISPR screens"/>
</dbReference>
<dbReference type="ChiTaRS" id="Pde4c">
    <property type="organism name" value="mouse"/>
</dbReference>
<dbReference type="PRO" id="PR:Q3UEI1"/>
<dbReference type="Proteomes" id="UP000000589">
    <property type="component" value="Chromosome 8"/>
</dbReference>
<dbReference type="RNAct" id="Q3UEI1">
    <property type="molecule type" value="protein"/>
</dbReference>
<dbReference type="Bgee" id="ENSMUSG00000031842">
    <property type="expression patterns" value="Expressed in cortex of kidney and 47 other cell types or tissues"/>
</dbReference>
<dbReference type="ExpressionAtlas" id="Q3UEI1">
    <property type="expression patterns" value="baseline and differential"/>
</dbReference>
<dbReference type="GO" id="GO:0005929">
    <property type="term" value="C:cilium"/>
    <property type="evidence" value="ECO:0000314"/>
    <property type="project" value="UniProtKB"/>
</dbReference>
<dbReference type="GO" id="GO:0004115">
    <property type="term" value="F:3',5'-cyclic-AMP phosphodiesterase activity"/>
    <property type="evidence" value="ECO:0000250"/>
    <property type="project" value="UniProtKB"/>
</dbReference>
<dbReference type="GO" id="GO:0046872">
    <property type="term" value="F:metal ion binding"/>
    <property type="evidence" value="ECO:0007669"/>
    <property type="project" value="UniProtKB-KW"/>
</dbReference>
<dbReference type="GO" id="GO:0006198">
    <property type="term" value="P:cAMP catabolic process"/>
    <property type="evidence" value="ECO:0007669"/>
    <property type="project" value="UniProtKB-UniPathway"/>
</dbReference>
<dbReference type="GO" id="GO:0007165">
    <property type="term" value="P:signal transduction"/>
    <property type="evidence" value="ECO:0007669"/>
    <property type="project" value="InterPro"/>
</dbReference>
<dbReference type="CDD" id="cd00077">
    <property type="entry name" value="HDc"/>
    <property type="match status" value="1"/>
</dbReference>
<dbReference type="FunFam" id="1.10.1300.10:FF:000001">
    <property type="entry name" value="Phosphodiesterase"/>
    <property type="match status" value="1"/>
</dbReference>
<dbReference type="Gene3D" id="1.10.1300.10">
    <property type="entry name" value="3'5'-cyclic nucleotide phosphodiesterase, catalytic domain"/>
    <property type="match status" value="1"/>
</dbReference>
<dbReference type="InterPro" id="IPR003607">
    <property type="entry name" value="HD/PDEase_dom"/>
</dbReference>
<dbReference type="InterPro" id="IPR040844">
    <property type="entry name" value="PDE4_UCR"/>
</dbReference>
<dbReference type="InterPro" id="IPR023088">
    <property type="entry name" value="PDEase"/>
</dbReference>
<dbReference type="InterPro" id="IPR002073">
    <property type="entry name" value="PDEase_catalytic_dom"/>
</dbReference>
<dbReference type="InterPro" id="IPR036971">
    <property type="entry name" value="PDEase_catalytic_dom_sf"/>
</dbReference>
<dbReference type="InterPro" id="IPR023174">
    <property type="entry name" value="PDEase_CS"/>
</dbReference>
<dbReference type="PANTHER" id="PTHR11347">
    <property type="entry name" value="CYCLIC NUCLEOTIDE PHOSPHODIESTERASE"/>
    <property type="match status" value="1"/>
</dbReference>
<dbReference type="Pfam" id="PF18100">
    <property type="entry name" value="PDE4_UCR"/>
    <property type="match status" value="1"/>
</dbReference>
<dbReference type="Pfam" id="PF00233">
    <property type="entry name" value="PDEase_I"/>
    <property type="match status" value="1"/>
</dbReference>
<dbReference type="PRINTS" id="PR00387">
    <property type="entry name" value="PDIESTERASE1"/>
</dbReference>
<dbReference type="SMART" id="SM00471">
    <property type="entry name" value="HDc"/>
    <property type="match status" value="1"/>
</dbReference>
<dbReference type="SUPFAM" id="SSF109604">
    <property type="entry name" value="HD-domain/PDEase-like"/>
    <property type="match status" value="1"/>
</dbReference>
<dbReference type="PROSITE" id="PS00126">
    <property type="entry name" value="PDEASE_I_1"/>
    <property type="match status" value="1"/>
</dbReference>
<dbReference type="PROSITE" id="PS51845">
    <property type="entry name" value="PDEASE_I_2"/>
    <property type="match status" value="1"/>
</dbReference>
<name>PDE4C_MOUSE</name>
<gene>
    <name evidence="9" type="primary">Pde4c</name>
</gene>